<sequence length="718" mass="78840">MSNTLTTERNITNSPTAAQLNEKESGKKEEEWIVGVLTTSDRVSQGIAIDQSGPEIVAIIKNQLKQMMGESCSINVITVYKVVPDEIEHIQQMITQWTHLKYKLILTTGGTGFTPRDVTPEAIKPLLNRRTKGIEIAMLKTSLDITPHAMLSRPIAGIRDQTLIITLPGSVKAIRENLGVVLPAIPHAIGLINSKPKSSLPESHRSKDYIKNSQIDSNLIINQNNQNNNNNNNNNNNNNNNNNSHNHHHHHHHSCGGSGKRGSSYNMTPVDEAIKIILEQCDNINNELEKVEITKSLGRILGEDISSVEPFPNFRASIKDGYAIRSKDGIGKYRLLGDSVAGNTGENLIPPQPQQPTNSINDDDNEKYCVRITTGAKIPDGYDSVVMIEETEMIGENMVSIEVTCKPGQDIREIGSDIASGTIVLNKGDKIGCAEIGLLATLGIQWVHCPKLPSISIISTGDELTDYQSKSDSMKSGIIRDSNSPTLATILQEISNHFGECCSRDNINLVGIIPDKLENLKDTLLDCSKKSDIIITSGGVSMGHLDLVKPLLEKIGTVHFGRVNMKPGKPLTFSTITTTTTDNNNQEEEKKKKTTLVFSLPGNPVSTVVTFYLFVVPALRKLGGFGIKNNGSQLNLPCVEVKLLDRIQLDHERPEYHRCTIEWDFQEHCFVSKSTGSQASCRLLSLKQANALLVLPQKHGHLEKGSMVKAILIGPINN</sequence>
<keyword id="KW-0067">ATP-binding</keyword>
<keyword id="KW-1003">Cell membrane</keyword>
<keyword id="KW-0963">Cytoplasm</keyword>
<keyword id="KW-0206">Cytoskeleton</keyword>
<keyword id="KW-0449">Lipoprotein</keyword>
<keyword id="KW-0460">Magnesium</keyword>
<keyword id="KW-0472">Membrane</keyword>
<keyword id="KW-0479">Metal-binding</keyword>
<keyword id="KW-0500">Molybdenum</keyword>
<keyword id="KW-0501">Molybdenum cofactor biosynthesis</keyword>
<keyword id="KW-0511">Multifunctional enzyme</keyword>
<keyword id="KW-0547">Nucleotide-binding</keyword>
<keyword id="KW-1185">Reference proteome</keyword>
<keyword id="KW-0808">Transferase</keyword>
<protein>
    <recommendedName>
        <fullName>Gephyrin</fullName>
    </recommendedName>
    <alternativeName>
        <fullName>Putative glycine receptor-tubulin linker protein homolog</fullName>
    </alternativeName>
    <domain>
        <recommendedName>
            <fullName>Molybdopterin adenylyltransferase</fullName>
            <shortName>MPT adenylyltransferase</shortName>
            <ecNumber evidence="3">2.7.7.75</ecNumber>
        </recommendedName>
        <alternativeName>
            <fullName>Domain G</fullName>
        </alternativeName>
    </domain>
    <domain>
        <recommendedName>
            <fullName>Molybdopterin molybdenumtransferase</fullName>
            <shortName>MPT Mo-transferase</shortName>
            <ecNumber evidence="3">2.10.1.1</ecNumber>
        </recommendedName>
        <alternativeName>
            <fullName>Domain E</fullName>
        </alternativeName>
    </domain>
</protein>
<gene>
    <name type="primary">gphn</name>
    <name type="synonym">gph</name>
    <name type="ORF">DDB_G0287261</name>
</gene>
<accession>Q54KM0</accession>
<proteinExistence type="inferred from homology"/>
<feature type="chain" id="PRO_0000327612" description="Gephyrin">
    <location>
        <begin position="1"/>
        <end position="718"/>
    </location>
</feature>
<feature type="region of interest" description="Disordered" evidence="4">
    <location>
        <begin position="1"/>
        <end position="26"/>
    </location>
</feature>
<feature type="region of interest" description="MPT Mo-transferase">
    <location>
        <begin position="31"/>
        <end position="176"/>
    </location>
</feature>
<feature type="region of interest" description="Disordered" evidence="4">
    <location>
        <begin position="222"/>
        <end position="266"/>
    </location>
</feature>
<feature type="region of interest" description="MPT adenylyltransferase">
    <location>
        <begin position="260"/>
        <end position="718"/>
    </location>
</feature>
<feature type="region of interest" description="Disordered" evidence="4">
    <location>
        <begin position="344"/>
        <end position="364"/>
    </location>
</feature>
<feature type="compositionally biased region" description="Polar residues" evidence="4">
    <location>
        <begin position="1"/>
        <end position="19"/>
    </location>
</feature>
<feature type="compositionally biased region" description="Low complexity" evidence="4">
    <location>
        <begin position="222"/>
        <end position="244"/>
    </location>
</feature>
<feature type="compositionally biased region" description="Basic residues" evidence="4">
    <location>
        <begin position="245"/>
        <end position="254"/>
    </location>
</feature>
<comment type="function">
    <text evidence="2">Microtubule-associated protein involved in membrane protein-cytoskeleton interactions.</text>
</comment>
<comment type="function">
    <text evidence="3">Also has a catalytic activity and catalyzes two steps in the biosynthesis of the molybdenum cofactor. In the first step, molybdopterin is adenylated. Subsequently, molybdate is inserted into adenylated molybdopterin and AMP is released.</text>
</comment>
<comment type="catalytic activity">
    <reaction evidence="3">
        <text>molybdopterin + ATP + H(+) = adenylyl-molybdopterin + diphosphate</text>
        <dbReference type="Rhea" id="RHEA:31331"/>
        <dbReference type="ChEBI" id="CHEBI:15378"/>
        <dbReference type="ChEBI" id="CHEBI:30616"/>
        <dbReference type="ChEBI" id="CHEBI:33019"/>
        <dbReference type="ChEBI" id="CHEBI:58698"/>
        <dbReference type="ChEBI" id="CHEBI:62727"/>
        <dbReference type="EC" id="2.7.7.75"/>
    </reaction>
    <physiologicalReaction direction="left-to-right" evidence="3">
        <dbReference type="Rhea" id="RHEA:31332"/>
    </physiologicalReaction>
</comment>
<comment type="catalytic activity">
    <reaction evidence="3">
        <text>adenylyl-molybdopterin + molybdate = Mo-molybdopterin + AMP + H(+)</text>
        <dbReference type="Rhea" id="RHEA:35047"/>
        <dbReference type="ChEBI" id="CHEBI:15378"/>
        <dbReference type="ChEBI" id="CHEBI:36264"/>
        <dbReference type="ChEBI" id="CHEBI:62727"/>
        <dbReference type="ChEBI" id="CHEBI:71302"/>
        <dbReference type="ChEBI" id="CHEBI:456215"/>
        <dbReference type="EC" id="2.10.1.1"/>
    </reaction>
    <physiologicalReaction direction="left-to-right" evidence="3">
        <dbReference type="Rhea" id="RHEA:35048"/>
    </physiologicalReaction>
</comment>
<comment type="cofactor">
    <cofactor evidence="1">
        <name>Mg(2+)</name>
        <dbReference type="ChEBI" id="CHEBI:18420"/>
    </cofactor>
</comment>
<comment type="pathway">
    <text evidence="3">Cofactor biosynthesis; molybdopterin biosynthesis.</text>
</comment>
<comment type="subunit">
    <text evidence="3">Homotrimer, homodimer and homooligomer.</text>
</comment>
<comment type="subcellular location">
    <subcellularLocation>
        <location evidence="2">Cell membrane</location>
        <topology evidence="2">Lipid-anchor</topology>
        <orientation evidence="2">Cytoplasmic side</orientation>
    </subcellularLocation>
    <subcellularLocation>
        <location evidence="3">Cytoplasm</location>
        <location evidence="3">Cytosol</location>
    </subcellularLocation>
    <subcellularLocation>
        <location evidence="2">Cytoplasm</location>
        <location evidence="2">Cytoskeleton</location>
    </subcellularLocation>
</comment>
<comment type="similarity">
    <text evidence="5">In the N-terminal section; belongs to the MoaB/Mog family.</text>
</comment>
<comment type="similarity">
    <text evidence="5">In the C-terminal section; belongs to the MoeA family.</text>
</comment>
<name>GEPH_DICDI</name>
<dbReference type="EC" id="2.7.7.75" evidence="3"/>
<dbReference type="EC" id="2.10.1.1" evidence="3"/>
<dbReference type="EMBL" id="AAFI02000099">
    <property type="protein sequence ID" value="EAL63832.1"/>
    <property type="molecule type" value="Genomic_DNA"/>
</dbReference>
<dbReference type="RefSeq" id="XP_637337.1">
    <property type="nucleotide sequence ID" value="XM_632245.1"/>
</dbReference>
<dbReference type="SMR" id="Q54KM0"/>
<dbReference type="FunCoup" id="Q54KM0">
    <property type="interactions" value="385"/>
</dbReference>
<dbReference type="STRING" id="44689.Q54KM0"/>
<dbReference type="PaxDb" id="44689-DDB0266393"/>
<dbReference type="EnsemblProtists" id="EAL63832">
    <property type="protein sequence ID" value="EAL63832"/>
    <property type="gene ID" value="DDB_G0287261"/>
</dbReference>
<dbReference type="GeneID" id="8626035"/>
<dbReference type="KEGG" id="ddi:DDB_G0287261"/>
<dbReference type="dictyBase" id="DDB_G0287261">
    <property type="gene designation" value="gphn"/>
</dbReference>
<dbReference type="VEuPathDB" id="AmoebaDB:DDB_G0287261"/>
<dbReference type="eggNOG" id="KOG2371">
    <property type="taxonomic scope" value="Eukaryota"/>
</dbReference>
<dbReference type="HOGENOM" id="CLU_010186_2_2_1"/>
<dbReference type="InParanoid" id="Q54KM0"/>
<dbReference type="OMA" id="ESPYPMI"/>
<dbReference type="PhylomeDB" id="Q54KM0"/>
<dbReference type="Reactome" id="R-DDI-947581">
    <property type="pathway name" value="Molybdenum cofactor biosynthesis"/>
</dbReference>
<dbReference type="UniPathway" id="UPA00344"/>
<dbReference type="PRO" id="PR:Q54KM0"/>
<dbReference type="Proteomes" id="UP000002195">
    <property type="component" value="Chromosome 5"/>
</dbReference>
<dbReference type="GO" id="GO:0005737">
    <property type="term" value="C:cytoplasm"/>
    <property type="evidence" value="ECO:0000318"/>
    <property type="project" value="GO_Central"/>
</dbReference>
<dbReference type="GO" id="GO:0005856">
    <property type="term" value="C:cytoskeleton"/>
    <property type="evidence" value="ECO:0007669"/>
    <property type="project" value="UniProtKB-SubCell"/>
</dbReference>
<dbReference type="GO" id="GO:0005829">
    <property type="term" value="C:cytosol"/>
    <property type="evidence" value="ECO:0000318"/>
    <property type="project" value="GO_Central"/>
</dbReference>
<dbReference type="GO" id="GO:0005886">
    <property type="term" value="C:plasma membrane"/>
    <property type="evidence" value="ECO:0007669"/>
    <property type="project" value="UniProtKB-SubCell"/>
</dbReference>
<dbReference type="GO" id="GO:0005524">
    <property type="term" value="F:ATP binding"/>
    <property type="evidence" value="ECO:0007669"/>
    <property type="project" value="UniProtKB-KW"/>
</dbReference>
<dbReference type="GO" id="GO:0046872">
    <property type="term" value="F:metal ion binding"/>
    <property type="evidence" value="ECO:0007669"/>
    <property type="project" value="UniProtKB-KW"/>
</dbReference>
<dbReference type="GO" id="GO:0061598">
    <property type="term" value="F:molybdopterin adenylyltransferase activity"/>
    <property type="evidence" value="ECO:0007669"/>
    <property type="project" value="UniProtKB-EC"/>
</dbReference>
<dbReference type="GO" id="GO:0061599">
    <property type="term" value="F:molybdopterin molybdotransferase activity"/>
    <property type="evidence" value="ECO:0000318"/>
    <property type="project" value="GO_Central"/>
</dbReference>
<dbReference type="GO" id="GO:0006777">
    <property type="term" value="P:Mo-molybdopterin cofactor biosynthetic process"/>
    <property type="evidence" value="ECO:0000318"/>
    <property type="project" value="GO_Central"/>
</dbReference>
<dbReference type="CDD" id="cd00887">
    <property type="entry name" value="MoeA"/>
    <property type="match status" value="1"/>
</dbReference>
<dbReference type="CDD" id="cd00886">
    <property type="entry name" value="MogA_MoaB"/>
    <property type="match status" value="1"/>
</dbReference>
<dbReference type="FunFam" id="2.170.190.11:FF:000024">
    <property type="entry name" value="Molybdopterin molybdenumtransferase"/>
    <property type="match status" value="1"/>
</dbReference>
<dbReference type="FunFam" id="2.40.340.10:FF:000007">
    <property type="entry name" value="Molybdopterin molybdenumtransferase"/>
    <property type="match status" value="1"/>
</dbReference>
<dbReference type="FunFam" id="3.40.980.10:FF:000009">
    <property type="entry name" value="Molybdopterin molybdenumtransferase"/>
    <property type="match status" value="1"/>
</dbReference>
<dbReference type="Gene3D" id="3.40.980.10">
    <property type="entry name" value="MoaB/Mog-like domain"/>
    <property type="match status" value="2"/>
</dbReference>
<dbReference type="Gene3D" id="2.40.340.10">
    <property type="entry name" value="MoeA, C-terminal, domain IV"/>
    <property type="match status" value="1"/>
</dbReference>
<dbReference type="Gene3D" id="3.90.105.10">
    <property type="entry name" value="Molybdopterin biosynthesis moea protein, domain 2"/>
    <property type="match status" value="1"/>
</dbReference>
<dbReference type="Gene3D" id="2.170.190.11">
    <property type="entry name" value="Molybdopterin biosynthesis moea protein, domain 3"/>
    <property type="match status" value="1"/>
</dbReference>
<dbReference type="InterPro" id="IPR036425">
    <property type="entry name" value="MoaB/Mog-like_dom_sf"/>
</dbReference>
<dbReference type="InterPro" id="IPR001453">
    <property type="entry name" value="MoaB/Mog_dom"/>
</dbReference>
<dbReference type="InterPro" id="IPR008284">
    <property type="entry name" value="MoCF_biosynth_CS"/>
</dbReference>
<dbReference type="InterPro" id="IPR038987">
    <property type="entry name" value="MoeA-like"/>
</dbReference>
<dbReference type="InterPro" id="IPR005111">
    <property type="entry name" value="MoeA_C_domain_IV"/>
</dbReference>
<dbReference type="InterPro" id="IPR036688">
    <property type="entry name" value="MoeA_C_domain_IV_sf"/>
</dbReference>
<dbReference type="InterPro" id="IPR005110">
    <property type="entry name" value="MoeA_linker/N"/>
</dbReference>
<dbReference type="InterPro" id="IPR036135">
    <property type="entry name" value="MoeA_linker/N_sf"/>
</dbReference>
<dbReference type="NCBIfam" id="TIGR00177">
    <property type="entry name" value="molyb_syn"/>
    <property type="match status" value="1"/>
</dbReference>
<dbReference type="PANTHER" id="PTHR10192:SF5">
    <property type="entry name" value="GEPHYRIN"/>
    <property type="match status" value="1"/>
</dbReference>
<dbReference type="PANTHER" id="PTHR10192">
    <property type="entry name" value="MOLYBDOPTERIN BIOSYNTHESIS PROTEIN"/>
    <property type="match status" value="1"/>
</dbReference>
<dbReference type="Pfam" id="PF00994">
    <property type="entry name" value="MoCF_biosynth"/>
    <property type="match status" value="2"/>
</dbReference>
<dbReference type="Pfam" id="PF03454">
    <property type="entry name" value="MoeA_C"/>
    <property type="match status" value="1"/>
</dbReference>
<dbReference type="Pfam" id="PF03453">
    <property type="entry name" value="MoeA_N"/>
    <property type="match status" value="1"/>
</dbReference>
<dbReference type="SMART" id="SM00852">
    <property type="entry name" value="MoCF_biosynth"/>
    <property type="match status" value="2"/>
</dbReference>
<dbReference type="SUPFAM" id="SSF63867">
    <property type="entry name" value="MoeA C-terminal domain-like"/>
    <property type="match status" value="1"/>
</dbReference>
<dbReference type="SUPFAM" id="SSF63882">
    <property type="entry name" value="MoeA N-terminal region -like"/>
    <property type="match status" value="1"/>
</dbReference>
<dbReference type="SUPFAM" id="SSF53218">
    <property type="entry name" value="Molybdenum cofactor biosynthesis proteins"/>
    <property type="match status" value="2"/>
</dbReference>
<dbReference type="PROSITE" id="PS01078">
    <property type="entry name" value="MOCF_BIOSYNTHESIS_1"/>
    <property type="match status" value="1"/>
</dbReference>
<evidence type="ECO:0000250" key="1"/>
<evidence type="ECO:0000250" key="2">
    <source>
        <dbReference type="UniProtKB" id="Q03555"/>
    </source>
</evidence>
<evidence type="ECO:0000250" key="3">
    <source>
        <dbReference type="UniProtKB" id="Q9NQX3"/>
    </source>
</evidence>
<evidence type="ECO:0000256" key="4">
    <source>
        <dbReference type="SAM" id="MobiDB-lite"/>
    </source>
</evidence>
<evidence type="ECO:0000305" key="5"/>
<reference key="1">
    <citation type="journal article" date="2005" name="Nature">
        <title>The genome of the social amoeba Dictyostelium discoideum.</title>
        <authorList>
            <person name="Eichinger L."/>
            <person name="Pachebat J.A."/>
            <person name="Gloeckner G."/>
            <person name="Rajandream M.A."/>
            <person name="Sucgang R."/>
            <person name="Berriman M."/>
            <person name="Song J."/>
            <person name="Olsen R."/>
            <person name="Szafranski K."/>
            <person name="Xu Q."/>
            <person name="Tunggal B."/>
            <person name="Kummerfeld S."/>
            <person name="Madera M."/>
            <person name="Konfortov B.A."/>
            <person name="Rivero F."/>
            <person name="Bankier A.T."/>
            <person name="Lehmann R."/>
            <person name="Hamlin N."/>
            <person name="Davies R."/>
            <person name="Gaudet P."/>
            <person name="Fey P."/>
            <person name="Pilcher K."/>
            <person name="Chen G."/>
            <person name="Saunders D."/>
            <person name="Sodergren E.J."/>
            <person name="Davis P."/>
            <person name="Kerhornou A."/>
            <person name="Nie X."/>
            <person name="Hall N."/>
            <person name="Anjard C."/>
            <person name="Hemphill L."/>
            <person name="Bason N."/>
            <person name="Farbrother P."/>
            <person name="Desany B."/>
            <person name="Just E."/>
            <person name="Morio T."/>
            <person name="Rost R."/>
            <person name="Churcher C.M."/>
            <person name="Cooper J."/>
            <person name="Haydock S."/>
            <person name="van Driessche N."/>
            <person name="Cronin A."/>
            <person name="Goodhead I."/>
            <person name="Muzny D.M."/>
            <person name="Mourier T."/>
            <person name="Pain A."/>
            <person name="Lu M."/>
            <person name="Harper D."/>
            <person name="Lindsay R."/>
            <person name="Hauser H."/>
            <person name="James K.D."/>
            <person name="Quiles M."/>
            <person name="Madan Babu M."/>
            <person name="Saito T."/>
            <person name="Buchrieser C."/>
            <person name="Wardroper A."/>
            <person name="Felder M."/>
            <person name="Thangavelu M."/>
            <person name="Johnson D."/>
            <person name="Knights A."/>
            <person name="Loulseged H."/>
            <person name="Mungall K.L."/>
            <person name="Oliver K."/>
            <person name="Price C."/>
            <person name="Quail M.A."/>
            <person name="Urushihara H."/>
            <person name="Hernandez J."/>
            <person name="Rabbinowitsch E."/>
            <person name="Steffen D."/>
            <person name="Sanders M."/>
            <person name="Ma J."/>
            <person name="Kohara Y."/>
            <person name="Sharp S."/>
            <person name="Simmonds M.N."/>
            <person name="Spiegler S."/>
            <person name="Tivey A."/>
            <person name="Sugano S."/>
            <person name="White B."/>
            <person name="Walker D."/>
            <person name="Woodward J.R."/>
            <person name="Winckler T."/>
            <person name="Tanaka Y."/>
            <person name="Shaulsky G."/>
            <person name="Schleicher M."/>
            <person name="Weinstock G.M."/>
            <person name="Rosenthal A."/>
            <person name="Cox E.C."/>
            <person name="Chisholm R.L."/>
            <person name="Gibbs R.A."/>
            <person name="Loomis W.F."/>
            <person name="Platzer M."/>
            <person name="Kay R.R."/>
            <person name="Williams J.G."/>
            <person name="Dear P.H."/>
            <person name="Noegel A.A."/>
            <person name="Barrell B.G."/>
            <person name="Kuspa A."/>
        </authorList>
    </citation>
    <scope>NUCLEOTIDE SEQUENCE [LARGE SCALE GENOMIC DNA]</scope>
    <source>
        <strain>AX4</strain>
    </source>
</reference>
<organism>
    <name type="scientific">Dictyostelium discoideum</name>
    <name type="common">Social amoeba</name>
    <dbReference type="NCBI Taxonomy" id="44689"/>
    <lineage>
        <taxon>Eukaryota</taxon>
        <taxon>Amoebozoa</taxon>
        <taxon>Evosea</taxon>
        <taxon>Eumycetozoa</taxon>
        <taxon>Dictyostelia</taxon>
        <taxon>Dictyosteliales</taxon>
        <taxon>Dictyosteliaceae</taxon>
        <taxon>Dictyostelium</taxon>
    </lineage>
</organism>